<sequence length="364" mass="40119">MKRRLVLENGAVFEGEAFGSLEHNMGEVVFNTGMTGYQEILSDPSYCGQIVTLTYPLIGNYGINRDDFESITPFVKGLIIKELCELPSNWRSAYTLDEYLKMKNIPGLQGIDTRKLTRMIRTAGALKGTFASSDEDIEAVLKRLNETELPRNQVSQVSAKTAYPSPGRGKRIVLVDFGMKHGILRELNKRKCDVIVVPYNITAEEVLQLKPDGIMLSNGPGDPKDVPEAIEMIKGVLGKVPLFGICLGHQLFALACGANTEKMKFGHRGSNHPVKELATGKVALTSQNHGYTVSSISKTELEVTHIAINDDTIEGLKHKTLPAFTVQYHPEASPGPEDANHLFDRFIEMIETTEKEGEAVCQNA</sequence>
<gene>
    <name evidence="1" type="primary">pyrAA</name>
    <name type="ordered locus">BSU15510</name>
</gene>
<proteinExistence type="evidence at protein level"/>
<accession>P25993</accession>
<feature type="chain" id="PRO_0000112255" description="Carbamoyl phosphate synthase pyrimidine-specific small chain">
    <location>
        <begin position="1"/>
        <end position="364"/>
    </location>
</feature>
<feature type="domain" description="Glutamine amidotransferase type-1" evidence="1">
    <location>
        <begin position="171"/>
        <end position="356"/>
    </location>
</feature>
<feature type="region of interest" description="CPSase" evidence="1">
    <location>
        <begin position="1"/>
        <end position="171"/>
    </location>
</feature>
<feature type="active site" description="Nucleophile" evidence="1">
    <location>
        <position position="246"/>
    </location>
</feature>
<feature type="active site" evidence="1">
    <location>
        <position position="329"/>
    </location>
</feature>
<feature type="active site" evidence="1">
    <location>
        <position position="331"/>
    </location>
</feature>
<feature type="binding site" evidence="1">
    <location>
        <position position="45"/>
    </location>
    <ligand>
        <name>L-glutamine</name>
        <dbReference type="ChEBI" id="CHEBI:58359"/>
    </ligand>
</feature>
<feature type="binding site" evidence="1">
    <location>
        <position position="219"/>
    </location>
    <ligand>
        <name>L-glutamine</name>
        <dbReference type="ChEBI" id="CHEBI:58359"/>
    </ligand>
</feature>
<feature type="binding site" evidence="1">
    <location>
        <position position="221"/>
    </location>
    <ligand>
        <name>L-glutamine</name>
        <dbReference type="ChEBI" id="CHEBI:58359"/>
    </ligand>
</feature>
<feature type="binding site" evidence="1">
    <location>
        <position position="247"/>
    </location>
    <ligand>
        <name>L-glutamine</name>
        <dbReference type="ChEBI" id="CHEBI:58359"/>
    </ligand>
</feature>
<feature type="binding site" evidence="1">
    <location>
        <position position="250"/>
    </location>
    <ligand>
        <name>L-glutamine</name>
        <dbReference type="ChEBI" id="CHEBI:58359"/>
    </ligand>
</feature>
<feature type="binding site" evidence="1">
    <location>
        <position position="288"/>
    </location>
    <ligand>
        <name>L-glutamine</name>
        <dbReference type="ChEBI" id="CHEBI:58359"/>
    </ligand>
</feature>
<feature type="binding site" evidence="1">
    <location>
        <position position="290"/>
    </location>
    <ligand>
        <name>L-glutamine</name>
        <dbReference type="ChEBI" id="CHEBI:58359"/>
    </ligand>
</feature>
<feature type="binding site" evidence="1">
    <location>
        <position position="291"/>
    </location>
    <ligand>
        <name>L-glutamine</name>
        <dbReference type="ChEBI" id="CHEBI:58359"/>
    </ligand>
</feature>
<dbReference type="EC" id="6.3.5.5" evidence="1"/>
<dbReference type="EMBL" id="M59757">
    <property type="protein sequence ID" value="AAA21269.1"/>
    <property type="molecule type" value="Genomic_DNA"/>
</dbReference>
<dbReference type="EMBL" id="AL009126">
    <property type="protein sequence ID" value="CAB13425.1"/>
    <property type="molecule type" value="Genomic_DNA"/>
</dbReference>
<dbReference type="PIR" id="E39845">
    <property type="entry name" value="E39845"/>
</dbReference>
<dbReference type="RefSeq" id="NP_389434.1">
    <property type="nucleotide sequence ID" value="NC_000964.3"/>
</dbReference>
<dbReference type="RefSeq" id="WP_003232115.1">
    <property type="nucleotide sequence ID" value="NZ_OZ025638.1"/>
</dbReference>
<dbReference type="SMR" id="P25993"/>
<dbReference type="FunCoup" id="P25993">
    <property type="interactions" value="682"/>
</dbReference>
<dbReference type="STRING" id="224308.BSU15510"/>
<dbReference type="PaxDb" id="224308-BSU15510"/>
<dbReference type="EnsemblBacteria" id="CAB13425">
    <property type="protein sequence ID" value="CAB13425"/>
    <property type="gene ID" value="BSU_15510"/>
</dbReference>
<dbReference type="GeneID" id="937368"/>
<dbReference type="KEGG" id="bsu:BSU15510"/>
<dbReference type="PATRIC" id="fig|224308.179.peg.1690"/>
<dbReference type="eggNOG" id="COG0505">
    <property type="taxonomic scope" value="Bacteria"/>
</dbReference>
<dbReference type="InParanoid" id="P25993"/>
<dbReference type="OrthoDB" id="9804328at2"/>
<dbReference type="PhylomeDB" id="P25993"/>
<dbReference type="BioCyc" id="BSUB:BSU15510-MONOMER"/>
<dbReference type="BioCyc" id="MetaCyc:BSU15510-MONOMER"/>
<dbReference type="SABIO-RK" id="P25993"/>
<dbReference type="UniPathway" id="UPA00070">
    <property type="reaction ID" value="UER00115"/>
</dbReference>
<dbReference type="Proteomes" id="UP000001570">
    <property type="component" value="Chromosome"/>
</dbReference>
<dbReference type="GO" id="GO:0005951">
    <property type="term" value="C:carbamoyl-phosphate synthase complex"/>
    <property type="evidence" value="ECO:0000318"/>
    <property type="project" value="GO_Central"/>
</dbReference>
<dbReference type="GO" id="GO:0005737">
    <property type="term" value="C:cytoplasm"/>
    <property type="evidence" value="ECO:0000318"/>
    <property type="project" value="GO_Central"/>
</dbReference>
<dbReference type="GO" id="GO:0005524">
    <property type="term" value="F:ATP binding"/>
    <property type="evidence" value="ECO:0007669"/>
    <property type="project" value="UniProtKB-UniRule"/>
</dbReference>
<dbReference type="GO" id="GO:0004088">
    <property type="term" value="F:carbamoyl-phosphate synthase (glutamine-hydrolyzing) activity"/>
    <property type="evidence" value="ECO:0007669"/>
    <property type="project" value="UniProtKB-UniRule"/>
</dbReference>
<dbReference type="GO" id="GO:0004359">
    <property type="term" value="F:glutaminase activity"/>
    <property type="evidence" value="ECO:0007669"/>
    <property type="project" value="RHEA"/>
</dbReference>
<dbReference type="GO" id="GO:0006207">
    <property type="term" value="P:'de novo' pyrimidine nucleobase biosynthetic process"/>
    <property type="evidence" value="ECO:0007669"/>
    <property type="project" value="InterPro"/>
</dbReference>
<dbReference type="GO" id="GO:0044205">
    <property type="term" value="P:'de novo' UMP biosynthetic process"/>
    <property type="evidence" value="ECO:0007669"/>
    <property type="project" value="UniProtKB-UniRule"/>
</dbReference>
<dbReference type="GO" id="GO:0006541">
    <property type="term" value="P:glutamine metabolic process"/>
    <property type="evidence" value="ECO:0007669"/>
    <property type="project" value="InterPro"/>
</dbReference>
<dbReference type="GO" id="GO:0006526">
    <property type="term" value="P:L-arginine biosynthetic process"/>
    <property type="evidence" value="ECO:0000318"/>
    <property type="project" value="GO_Central"/>
</dbReference>
<dbReference type="CDD" id="cd01744">
    <property type="entry name" value="GATase1_CPSase"/>
    <property type="match status" value="1"/>
</dbReference>
<dbReference type="FunFam" id="3.40.50.880:FF:000029">
    <property type="entry name" value="Carbamoyl-phosphate synthase small chain"/>
    <property type="match status" value="1"/>
</dbReference>
<dbReference type="FunFam" id="3.50.30.20:FF:000001">
    <property type="entry name" value="Carbamoyl-phosphate synthase small chain"/>
    <property type="match status" value="1"/>
</dbReference>
<dbReference type="Gene3D" id="3.40.50.880">
    <property type="match status" value="1"/>
</dbReference>
<dbReference type="Gene3D" id="3.50.30.20">
    <property type="entry name" value="Carbamoyl-phosphate synthase small subunit, N-terminal domain"/>
    <property type="match status" value="1"/>
</dbReference>
<dbReference type="HAMAP" id="MF_01209">
    <property type="entry name" value="CPSase_S_chain"/>
    <property type="match status" value="1"/>
</dbReference>
<dbReference type="InterPro" id="IPR050472">
    <property type="entry name" value="Anth_synth/Amidotransfase"/>
</dbReference>
<dbReference type="InterPro" id="IPR006274">
    <property type="entry name" value="CarbamoylP_synth_ssu"/>
</dbReference>
<dbReference type="InterPro" id="IPR002474">
    <property type="entry name" value="CarbamoylP_synth_ssu_N"/>
</dbReference>
<dbReference type="InterPro" id="IPR036480">
    <property type="entry name" value="CarbP_synth_ssu_N_sf"/>
</dbReference>
<dbReference type="InterPro" id="IPR029062">
    <property type="entry name" value="Class_I_gatase-like"/>
</dbReference>
<dbReference type="InterPro" id="IPR035686">
    <property type="entry name" value="CPSase_GATase1"/>
</dbReference>
<dbReference type="InterPro" id="IPR017926">
    <property type="entry name" value="GATASE"/>
</dbReference>
<dbReference type="NCBIfam" id="TIGR01368">
    <property type="entry name" value="CPSaseIIsmall"/>
    <property type="match status" value="1"/>
</dbReference>
<dbReference type="NCBIfam" id="NF009475">
    <property type="entry name" value="PRK12838.1"/>
    <property type="match status" value="1"/>
</dbReference>
<dbReference type="PANTHER" id="PTHR43418:SF7">
    <property type="entry name" value="CARBAMOYL-PHOSPHATE SYNTHASE SMALL CHAIN"/>
    <property type="match status" value="1"/>
</dbReference>
<dbReference type="PANTHER" id="PTHR43418">
    <property type="entry name" value="MULTIFUNCTIONAL TRYPTOPHAN BIOSYNTHESIS PROTEIN-RELATED"/>
    <property type="match status" value="1"/>
</dbReference>
<dbReference type="Pfam" id="PF00988">
    <property type="entry name" value="CPSase_sm_chain"/>
    <property type="match status" value="1"/>
</dbReference>
<dbReference type="Pfam" id="PF00117">
    <property type="entry name" value="GATase"/>
    <property type="match status" value="1"/>
</dbReference>
<dbReference type="PRINTS" id="PR00097">
    <property type="entry name" value="ANTSNTHASEII"/>
</dbReference>
<dbReference type="PRINTS" id="PR00099">
    <property type="entry name" value="CPSGATASE"/>
</dbReference>
<dbReference type="PRINTS" id="PR00096">
    <property type="entry name" value="GATASE"/>
</dbReference>
<dbReference type="SMART" id="SM01097">
    <property type="entry name" value="CPSase_sm_chain"/>
    <property type="match status" value="1"/>
</dbReference>
<dbReference type="SUPFAM" id="SSF52021">
    <property type="entry name" value="Carbamoyl phosphate synthetase, small subunit N-terminal domain"/>
    <property type="match status" value="1"/>
</dbReference>
<dbReference type="SUPFAM" id="SSF52317">
    <property type="entry name" value="Class I glutamine amidotransferase-like"/>
    <property type="match status" value="1"/>
</dbReference>
<dbReference type="PROSITE" id="PS51273">
    <property type="entry name" value="GATASE_TYPE_1"/>
    <property type="match status" value="1"/>
</dbReference>
<reference key="1">
    <citation type="journal article" date="1991" name="J. Biol. Chem.">
        <title>Functional organization and nucleotide sequence of the Bacillus subtilis pyrimidine biosynthetic operon.</title>
        <authorList>
            <person name="Quinn C.L."/>
            <person name="Stephenson B.T."/>
            <person name="Switzer R.L."/>
        </authorList>
    </citation>
    <scope>NUCLEOTIDE SEQUENCE [GENOMIC DNA]</scope>
</reference>
<reference key="2">
    <citation type="journal article" date="1997" name="Nature">
        <title>The complete genome sequence of the Gram-positive bacterium Bacillus subtilis.</title>
        <authorList>
            <person name="Kunst F."/>
            <person name="Ogasawara N."/>
            <person name="Moszer I."/>
            <person name="Albertini A.M."/>
            <person name="Alloni G."/>
            <person name="Azevedo V."/>
            <person name="Bertero M.G."/>
            <person name="Bessieres P."/>
            <person name="Bolotin A."/>
            <person name="Borchert S."/>
            <person name="Borriss R."/>
            <person name="Boursier L."/>
            <person name="Brans A."/>
            <person name="Braun M."/>
            <person name="Brignell S.C."/>
            <person name="Bron S."/>
            <person name="Brouillet S."/>
            <person name="Bruschi C.V."/>
            <person name="Caldwell B."/>
            <person name="Capuano V."/>
            <person name="Carter N.M."/>
            <person name="Choi S.-K."/>
            <person name="Codani J.-J."/>
            <person name="Connerton I.F."/>
            <person name="Cummings N.J."/>
            <person name="Daniel R.A."/>
            <person name="Denizot F."/>
            <person name="Devine K.M."/>
            <person name="Duesterhoeft A."/>
            <person name="Ehrlich S.D."/>
            <person name="Emmerson P.T."/>
            <person name="Entian K.-D."/>
            <person name="Errington J."/>
            <person name="Fabret C."/>
            <person name="Ferrari E."/>
            <person name="Foulger D."/>
            <person name="Fritz C."/>
            <person name="Fujita M."/>
            <person name="Fujita Y."/>
            <person name="Fuma S."/>
            <person name="Galizzi A."/>
            <person name="Galleron N."/>
            <person name="Ghim S.-Y."/>
            <person name="Glaser P."/>
            <person name="Goffeau A."/>
            <person name="Golightly E.J."/>
            <person name="Grandi G."/>
            <person name="Guiseppi G."/>
            <person name="Guy B.J."/>
            <person name="Haga K."/>
            <person name="Haiech J."/>
            <person name="Harwood C.R."/>
            <person name="Henaut A."/>
            <person name="Hilbert H."/>
            <person name="Holsappel S."/>
            <person name="Hosono S."/>
            <person name="Hullo M.-F."/>
            <person name="Itaya M."/>
            <person name="Jones L.-M."/>
            <person name="Joris B."/>
            <person name="Karamata D."/>
            <person name="Kasahara Y."/>
            <person name="Klaerr-Blanchard M."/>
            <person name="Klein C."/>
            <person name="Kobayashi Y."/>
            <person name="Koetter P."/>
            <person name="Koningstein G."/>
            <person name="Krogh S."/>
            <person name="Kumano M."/>
            <person name="Kurita K."/>
            <person name="Lapidus A."/>
            <person name="Lardinois S."/>
            <person name="Lauber J."/>
            <person name="Lazarevic V."/>
            <person name="Lee S.-M."/>
            <person name="Levine A."/>
            <person name="Liu H."/>
            <person name="Masuda S."/>
            <person name="Mauel C."/>
            <person name="Medigue C."/>
            <person name="Medina N."/>
            <person name="Mellado R.P."/>
            <person name="Mizuno M."/>
            <person name="Moestl D."/>
            <person name="Nakai S."/>
            <person name="Noback M."/>
            <person name="Noone D."/>
            <person name="O'Reilly M."/>
            <person name="Ogawa K."/>
            <person name="Ogiwara A."/>
            <person name="Oudega B."/>
            <person name="Park S.-H."/>
            <person name="Parro V."/>
            <person name="Pohl T.M."/>
            <person name="Portetelle D."/>
            <person name="Porwollik S."/>
            <person name="Prescott A.M."/>
            <person name="Presecan E."/>
            <person name="Pujic P."/>
            <person name="Purnelle B."/>
            <person name="Rapoport G."/>
            <person name="Rey M."/>
            <person name="Reynolds S."/>
            <person name="Rieger M."/>
            <person name="Rivolta C."/>
            <person name="Rocha E."/>
            <person name="Roche B."/>
            <person name="Rose M."/>
            <person name="Sadaie Y."/>
            <person name="Sato T."/>
            <person name="Scanlan E."/>
            <person name="Schleich S."/>
            <person name="Schroeter R."/>
            <person name="Scoffone F."/>
            <person name="Sekiguchi J."/>
            <person name="Sekowska A."/>
            <person name="Seror S.J."/>
            <person name="Serror P."/>
            <person name="Shin B.-S."/>
            <person name="Soldo B."/>
            <person name="Sorokin A."/>
            <person name="Tacconi E."/>
            <person name="Takagi T."/>
            <person name="Takahashi H."/>
            <person name="Takemaru K."/>
            <person name="Takeuchi M."/>
            <person name="Tamakoshi A."/>
            <person name="Tanaka T."/>
            <person name="Terpstra P."/>
            <person name="Tognoni A."/>
            <person name="Tosato V."/>
            <person name="Uchiyama S."/>
            <person name="Vandenbol M."/>
            <person name="Vannier F."/>
            <person name="Vassarotti A."/>
            <person name="Viari A."/>
            <person name="Wambutt R."/>
            <person name="Wedler E."/>
            <person name="Wedler H."/>
            <person name="Weitzenegger T."/>
            <person name="Winters P."/>
            <person name="Wipat A."/>
            <person name="Yamamoto H."/>
            <person name="Yamane K."/>
            <person name="Yasumoto K."/>
            <person name="Yata K."/>
            <person name="Yoshida K."/>
            <person name="Yoshikawa H.-F."/>
            <person name="Zumstein E."/>
            <person name="Yoshikawa H."/>
            <person name="Danchin A."/>
        </authorList>
    </citation>
    <scope>NUCLEOTIDE SEQUENCE [LARGE SCALE GENOMIC DNA]</scope>
    <source>
        <strain>168</strain>
    </source>
</reference>
<reference key="3">
    <citation type="journal article" date="2021" name="Redox Biol.">
        <title>The Bacillus subtilis monothiol bacilliredoxin BrxC (YtxJ) and the Bdr (YpdA) disulfide reductase reduce S-bacillithiolated proteins.</title>
        <authorList>
            <person name="Gaballa A."/>
            <person name="Su T.T."/>
            <person name="Helmann J.D."/>
        </authorList>
    </citation>
    <scope>INTERACTION WITH BRXC</scope>
    <scope>IDENTIFICATION BY MASS SPECTROMETRY</scope>
    <source>
        <strain evidence="3">168 / CU1065</strain>
    </source>
</reference>
<name>CARA_BACSU</name>
<keyword id="KW-0067">ATP-binding</keyword>
<keyword id="KW-0315">Glutamine amidotransferase</keyword>
<keyword id="KW-0436">Ligase</keyword>
<keyword id="KW-0547">Nucleotide-binding</keyword>
<keyword id="KW-0665">Pyrimidine biosynthesis</keyword>
<keyword id="KW-1185">Reference proteome</keyword>
<organism>
    <name type="scientific">Bacillus subtilis (strain 168)</name>
    <dbReference type="NCBI Taxonomy" id="224308"/>
    <lineage>
        <taxon>Bacteria</taxon>
        <taxon>Bacillati</taxon>
        <taxon>Bacillota</taxon>
        <taxon>Bacilli</taxon>
        <taxon>Bacillales</taxon>
        <taxon>Bacillaceae</taxon>
        <taxon>Bacillus</taxon>
    </lineage>
</organism>
<evidence type="ECO:0000255" key="1">
    <source>
        <dbReference type="HAMAP-Rule" id="MF_01209"/>
    </source>
</evidence>
<evidence type="ECO:0000269" key="2">
    <source>
    </source>
</evidence>
<evidence type="ECO:0000303" key="3">
    <source>
    </source>
</evidence>
<evidence type="ECO:0000305" key="4"/>
<comment type="function">
    <text evidence="4">Small subunit of the glutamine-dependent carbamoyl phosphate synthetase (CPSase). CPSase catalyzes the formation of carbamoyl phosphate from the ammonia moiety of glutamine, carbonate, and phosphate donated by ATP, constituting the first step of the biosynthetic pathway leading to arginine and/or urea. The small subunit (glutamine amidotransferase) binds and cleaves glutamine to supply the large subunit with the substrate ammonia.</text>
</comment>
<comment type="catalytic activity">
    <reaction evidence="1">
        <text>hydrogencarbonate + L-glutamine + 2 ATP + H2O = carbamoyl phosphate + L-glutamate + 2 ADP + phosphate + 2 H(+)</text>
        <dbReference type="Rhea" id="RHEA:18633"/>
        <dbReference type="ChEBI" id="CHEBI:15377"/>
        <dbReference type="ChEBI" id="CHEBI:15378"/>
        <dbReference type="ChEBI" id="CHEBI:17544"/>
        <dbReference type="ChEBI" id="CHEBI:29985"/>
        <dbReference type="ChEBI" id="CHEBI:30616"/>
        <dbReference type="ChEBI" id="CHEBI:43474"/>
        <dbReference type="ChEBI" id="CHEBI:58228"/>
        <dbReference type="ChEBI" id="CHEBI:58359"/>
        <dbReference type="ChEBI" id="CHEBI:456216"/>
        <dbReference type="EC" id="6.3.5.5"/>
    </reaction>
</comment>
<comment type="catalytic activity">
    <molecule>Carbamoyl phosphate synthase pyrimidine-specific small chain</molecule>
    <reaction evidence="1">
        <text>L-glutamine + H2O = L-glutamate + NH4(+)</text>
        <dbReference type="Rhea" id="RHEA:15889"/>
        <dbReference type="ChEBI" id="CHEBI:15377"/>
        <dbReference type="ChEBI" id="CHEBI:28938"/>
        <dbReference type="ChEBI" id="CHEBI:29985"/>
        <dbReference type="ChEBI" id="CHEBI:58359"/>
    </reaction>
</comment>
<comment type="pathway">
    <text evidence="1">Pyrimidine metabolism; UMP biosynthesis via de novo pathway; (S)-dihydroorotate from bicarbonate: step 1/3.</text>
</comment>
<comment type="subunit">
    <text evidence="1 2">Composed of two chains; the small (or glutamine) chain promotes the hydrolysis of glutamine to ammonia, which is used by the large (or ammonia) chain to synthesize carbamoyl phosphate. Tetramer of heterodimers (alpha,beta)4 (By similarity). Interacts with BrxC (PubMed:33722570).</text>
</comment>
<comment type="similarity">
    <text evidence="1">Belongs to the CarA family.</text>
</comment>
<protein>
    <recommendedName>
        <fullName evidence="4">Carbamoyl phosphate synthase pyrimidine-specific small chain</fullName>
        <ecNumber evidence="1">6.3.5.5</ecNumber>
    </recommendedName>
    <alternativeName>
        <fullName evidence="1">Carbamoyl phosphate synthetase glutamine chain 2</fullName>
    </alternativeName>
</protein>